<feature type="chain" id="PRO_1000122524" description="Aspartyl/glutamyl-tRNA(Asn/Gln) amidotransferase subunit B">
    <location>
        <begin position="1"/>
        <end position="475"/>
    </location>
</feature>
<sequence length="475" mass="53520">MHFETVIGLEVHVELKTESKMFSASPAHFGAEPNTNVNVVDLGYPGVLPVVNKTAVDWAMRAAMALNMDIRTETKFDRKNYFYPDNPKAYQISQFDEPIGENGYIDIEVNGETKRIGITRLHMEEDAGKLTHKDGYSLVDLNRQGTPLVEIVSEPDIRTPEEAYAYLEKLKAIIQYTGVSDVRMEEGSLRCDANISLRPVGQEKFGTKAELKNLNSFSFVKKGLEHEVKRQEEVLLNGGEILQETRRFDESTGKTILMRVKEGSDDYRYFPEPDLVPLYIDEAWKERVRASIPELPDVRKAKYVSEYGLPEYDAHVLTLTKEMSDFFEAMIALDADAKLSSNWLMGGVNEYLNKNQKELHETALTPENLSEMVKLLADGTISSKIAKKVFADTVETGKAPKVIMEEQGLVQISDPEQLKAFVTEALDNNPQSIEDFKNGKGKATGFLVGQIMKISKGQANPQLVNKILREELEKR</sequence>
<keyword id="KW-0067">ATP-binding</keyword>
<keyword id="KW-0436">Ligase</keyword>
<keyword id="KW-0547">Nucleotide-binding</keyword>
<keyword id="KW-0648">Protein biosynthesis</keyword>
<keyword id="KW-1185">Reference proteome</keyword>
<reference key="1">
    <citation type="journal article" date="2009" name="J. Bacteriol.">
        <title>Complete genome sequence of Macrococcus caseolyticus strain JCSCS5402, reflecting the ancestral genome of the human-pathogenic staphylococci.</title>
        <authorList>
            <person name="Baba T."/>
            <person name="Kuwahara-Arai K."/>
            <person name="Uchiyama I."/>
            <person name="Takeuchi F."/>
            <person name="Ito T."/>
            <person name="Hiramatsu K."/>
        </authorList>
    </citation>
    <scope>NUCLEOTIDE SEQUENCE [LARGE SCALE GENOMIC DNA]</scope>
    <source>
        <strain>JCSC5402</strain>
    </source>
</reference>
<comment type="function">
    <text evidence="1">Allows the formation of correctly charged Asn-tRNA(Asn) or Gln-tRNA(Gln) through the transamidation of misacylated Asp-tRNA(Asn) or Glu-tRNA(Gln) in organisms which lack either or both of asparaginyl-tRNA or glutaminyl-tRNA synthetases. The reaction takes place in the presence of glutamine and ATP through an activated phospho-Asp-tRNA(Asn) or phospho-Glu-tRNA(Gln).</text>
</comment>
<comment type="catalytic activity">
    <reaction evidence="1">
        <text>L-glutamyl-tRNA(Gln) + L-glutamine + ATP + H2O = L-glutaminyl-tRNA(Gln) + L-glutamate + ADP + phosphate + H(+)</text>
        <dbReference type="Rhea" id="RHEA:17521"/>
        <dbReference type="Rhea" id="RHEA-COMP:9681"/>
        <dbReference type="Rhea" id="RHEA-COMP:9684"/>
        <dbReference type="ChEBI" id="CHEBI:15377"/>
        <dbReference type="ChEBI" id="CHEBI:15378"/>
        <dbReference type="ChEBI" id="CHEBI:29985"/>
        <dbReference type="ChEBI" id="CHEBI:30616"/>
        <dbReference type="ChEBI" id="CHEBI:43474"/>
        <dbReference type="ChEBI" id="CHEBI:58359"/>
        <dbReference type="ChEBI" id="CHEBI:78520"/>
        <dbReference type="ChEBI" id="CHEBI:78521"/>
        <dbReference type="ChEBI" id="CHEBI:456216"/>
    </reaction>
</comment>
<comment type="catalytic activity">
    <reaction evidence="1">
        <text>L-aspartyl-tRNA(Asn) + L-glutamine + ATP + H2O = L-asparaginyl-tRNA(Asn) + L-glutamate + ADP + phosphate + 2 H(+)</text>
        <dbReference type="Rhea" id="RHEA:14513"/>
        <dbReference type="Rhea" id="RHEA-COMP:9674"/>
        <dbReference type="Rhea" id="RHEA-COMP:9677"/>
        <dbReference type="ChEBI" id="CHEBI:15377"/>
        <dbReference type="ChEBI" id="CHEBI:15378"/>
        <dbReference type="ChEBI" id="CHEBI:29985"/>
        <dbReference type="ChEBI" id="CHEBI:30616"/>
        <dbReference type="ChEBI" id="CHEBI:43474"/>
        <dbReference type="ChEBI" id="CHEBI:58359"/>
        <dbReference type="ChEBI" id="CHEBI:78515"/>
        <dbReference type="ChEBI" id="CHEBI:78516"/>
        <dbReference type="ChEBI" id="CHEBI:456216"/>
    </reaction>
</comment>
<comment type="subunit">
    <text evidence="1">Heterotrimer of A, B and C subunits.</text>
</comment>
<comment type="similarity">
    <text evidence="1">Belongs to the GatB/GatE family. GatB subfamily.</text>
</comment>
<organism>
    <name type="scientific">Macrococcus caseolyticus (strain JCSC5402)</name>
    <name type="common">Macrococcoides caseolyticum</name>
    <dbReference type="NCBI Taxonomy" id="458233"/>
    <lineage>
        <taxon>Bacteria</taxon>
        <taxon>Bacillati</taxon>
        <taxon>Bacillota</taxon>
        <taxon>Bacilli</taxon>
        <taxon>Bacillales</taxon>
        <taxon>Staphylococcaceae</taxon>
        <taxon>Macrococcoides</taxon>
    </lineage>
</organism>
<dbReference type="EC" id="6.3.5.-" evidence="1"/>
<dbReference type="EMBL" id="AP009484">
    <property type="protein sequence ID" value="BAH18343.1"/>
    <property type="molecule type" value="Genomic_DNA"/>
</dbReference>
<dbReference type="RefSeq" id="WP_012657537.1">
    <property type="nucleotide sequence ID" value="NC_011999.1"/>
</dbReference>
<dbReference type="SMR" id="B9E825"/>
<dbReference type="STRING" id="458233.MCCL_1636"/>
<dbReference type="KEGG" id="mcl:MCCL_1636"/>
<dbReference type="eggNOG" id="COG0064">
    <property type="taxonomic scope" value="Bacteria"/>
</dbReference>
<dbReference type="HOGENOM" id="CLU_019240_4_0_9"/>
<dbReference type="OrthoDB" id="9804078at2"/>
<dbReference type="Proteomes" id="UP000001383">
    <property type="component" value="Chromosome"/>
</dbReference>
<dbReference type="GO" id="GO:0050566">
    <property type="term" value="F:asparaginyl-tRNA synthase (glutamine-hydrolyzing) activity"/>
    <property type="evidence" value="ECO:0007669"/>
    <property type="project" value="RHEA"/>
</dbReference>
<dbReference type="GO" id="GO:0005524">
    <property type="term" value="F:ATP binding"/>
    <property type="evidence" value="ECO:0007669"/>
    <property type="project" value="UniProtKB-KW"/>
</dbReference>
<dbReference type="GO" id="GO:0050567">
    <property type="term" value="F:glutaminyl-tRNA synthase (glutamine-hydrolyzing) activity"/>
    <property type="evidence" value="ECO:0007669"/>
    <property type="project" value="UniProtKB-UniRule"/>
</dbReference>
<dbReference type="GO" id="GO:0070681">
    <property type="term" value="P:glutaminyl-tRNAGln biosynthesis via transamidation"/>
    <property type="evidence" value="ECO:0007669"/>
    <property type="project" value="TreeGrafter"/>
</dbReference>
<dbReference type="GO" id="GO:0006412">
    <property type="term" value="P:translation"/>
    <property type="evidence" value="ECO:0007669"/>
    <property type="project" value="UniProtKB-UniRule"/>
</dbReference>
<dbReference type="FunFam" id="1.10.10.410:FF:000001">
    <property type="entry name" value="Aspartyl/glutamyl-tRNA(Asn/Gln) amidotransferase subunit B"/>
    <property type="match status" value="1"/>
</dbReference>
<dbReference type="FunFam" id="1.10.150.380:FF:000001">
    <property type="entry name" value="Aspartyl/glutamyl-tRNA(Asn/Gln) amidotransferase subunit B"/>
    <property type="match status" value="1"/>
</dbReference>
<dbReference type="Gene3D" id="1.10.10.410">
    <property type="match status" value="1"/>
</dbReference>
<dbReference type="Gene3D" id="1.10.150.380">
    <property type="entry name" value="GatB domain, N-terminal subdomain"/>
    <property type="match status" value="1"/>
</dbReference>
<dbReference type="HAMAP" id="MF_00121">
    <property type="entry name" value="GatB"/>
    <property type="match status" value="1"/>
</dbReference>
<dbReference type="InterPro" id="IPR017959">
    <property type="entry name" value="Asn/Gln-tRNA_amidoTrfase_suB/E"/>
</dbReference>
<dbReference type="InterPro" id="IPR006075">
    <property type="entry name" value="Asn/Gln-tRNA_Trfase_suB/E_cat"/>
</dbReference>
<dbReference type="InterPro" id="IPR018027">
    <property type="entry name" value="Asn/Gln_amidotransferase"/>
</dbReference>
<dbReference type="InterPro" id="IPR003789">
    <property type="entry name" value="Asn/Gln_tRNA_amidoTrase-B-like"/>
</dbReference>
<dbReference type="InterPro" id="IPR004413">
    <property type="entry name" value="GatB"/>
</dbReference>
<dbReference type="InterPro" id="IPR042114">
    <property type="entry name" value="GatB_C_1"/>
</dbReference>
<dbReference type="InterPro" id="IPR023168">
    <property type="entry name" value="GatB_Yqey_C_2"/>
</dbReference>
<dbReference type="InterPro" id="IPR017958">
    <property type="entry name" value="Gln-tRNA_amidoTrfase_suB_CS"/>
</dbReference>
<dbReference type="InterPro" id="IPR014746">
    <property type="entry name" value="Gln_synth/guanido_kin_cat_dom"/>
</dbReference>
<dbReference type="NCBIfam" id="TIGR00133">
    <property type="entry name" value="gatB"/>
    <property type="match status" value="1"/>
</dbReference>
<dbReference type="NCBIfam" id="NF004011">
    <property type="entry name" value="PRK05477.1-1"/>
    <property type="match status" value="1"/>
</dbReference>
<dbReference type="NCBIfam" id="NF004012">
    <property type="entry name" value="PRK05477.1-2"/>
    <property type="match status" value="1"/>
</dbReference>
<dbReference type="NCBIfam" id="NF004014">
    <property type="entry name" value="PRK05477.1-4"/>
    <property type="match status" value="1"/>
</dbReference>
<dbReference type="PANTHER" id="PTHR11659">
    <property type="entry name" value="GLUTAMYL-TRNA GLN AMIDOTRANSFERASE SUBUNIT B MITOCHONDRIAL AND PROKARYOTIC PET112-RELATED"/>
    <property type="match status" value="1"/>
</dbReference>
<dbReference type="PANTHER" id="PTHR11659:SF0">
    <property type="entry name" value="GLUTAMYL-TRNA(GLN) AMIDOTRANSFERASE SUBUNIT B, MITOCHONDRIAL"/>
    <property type="match status" value="1"/>
</dbReference>
<dbReference type="Pfam" id="PF02934">
    <property type="entry name" value="GatB_N"/>
    <property type="match status" value="1"/>
</dbReference>
<dbReference type="Pfam" id="PF02637">
    <property type="entry name" value="GatB_Yqey"/>
    <property type="match status" value="1"/>
</dbReference>
<dbReference type="SMART" id="SM00845">
    <property type="entry name" value="GatB_Yqey"/>
    <property type="match status" value="1"/>
</dbReference>
<dbReference type="SUPFAM" id="SSF89095">
    <property type="entry name" value="GatB/YqeY motif"/>
    <property type="match status" value="1"/>
</dbReference>
<dbReference type="SUPFAM" id="SSF55931">
    <property type="entry name" value="Glutamine synthetase/guanido kinase"/>
    <property type="match status" value="1"/>
</dbReference>
<dbReference type="PROSITE" id="PS01234">
    <property type="entry name" value="GATB"/>
    <property type="match status" value="1"/>
</dbReference>
<protein>
    <recommendedName>
        <fullName evidence="1">Aspartyl/glutamyl-tRNA(Asn/Gln) amidotransferase subunit B</fullName>
        <shortName evidence="1">Asp/Glu-ADT subunit B</shortName>
        <ecNumber evidence="1">6.3.5.-</ecNumber>
    </recommendedName>
</protein>
<gene>
    <name evidence="1" type="primary">gatB</name>
    <name type="ordered locus">MCCL_1636</name>
</gene>
<proteinExistence type="inferred from homology"/>
<evidence type="ECO:0000255" key="1">
    <source>
        <dbReference type="HAMAP-Rule" id="MF_00121"/>
    </source>
</evidence>
<name>GATB_MACCJ</name>
<accession>B9E825</accession>